<keyword id="KW-0002">3D-structure</keyword>
<keyword id="KW-0413">Isomerase</keyword>
<keyword id="KW-0456">Lyase</keyword>
<keyword id="KW-0460">Magnesium</keyword>
<keyword id="KW-0479">Metal-binding</keyword>
<accession>A0NXQ8</accession>
<protein>
    <recommendedName>
        <fullName evidence="2">Cis-3-hydroxy-L-proline dehydratase</fullName>
        <shortName evidence="2">c3LHyp dehydratase</shortName>
        <shortName evidence="2">c3LHypD</shortName>
        <ecNumber evidence="1">4.2.1.171</ecNumber>
    </recommendedName>
</protein>
<gene>
    <name evidence="5" type="ORF">SIAM614_28497</name>
</gene>
<feature type="chain" id="PRO_0000433398" description="Cis-3-hydroxy-L-proline dehydratase">
    <location>
        <begin position="1"/>
        <end position="367"/>
    </location>
</feature>
<feature type="active site" description="Proton donor/acceptor" evidence="4">
    <location>
        <position position="165"/>
    </location>
</feature>
<feature type="active site" description="Proton donor/acceptor" evidence="4">
    <location>
        <position position="265"/>
    </location>
</feature>
<feature type="binding site" evidence="1 6">
    <location>
        <position position="193"/>
    </location>
    <ligand>
        <name>Mg(2+)</name>
        <dbReference type="ChEBI" id="CHEBI:18420"/>
    </ligand>
</feature>
<feature type="binding site" evidence="1 6">
    <location>
        <position position="218"/>
    </location>
    <ligand>
        <name>Mg(2+)</name>
        <dbReference type="ChEBI" id="CHEBI:18420"/>
    </ligand>
</feature>
<feature type="binding site" evidence="1 6">
    <location>
        <position position="241"/>
    </location>
    <ligand>
        <name>Mg(2+)</name>
        <dbReference type="ChEBI" id="CHEBI:18420"/>
    </ligand>
</feature>
<feature type="mutagenesis site" description="Loss of enzymatic activity." evidence="1">
    <original>K</original>
    <variation>A</variation>
    <location>
        <position position="165"/>
    </location>
</feature>
<feature type="mutagenesis site" description="Loss of enzymatic activity." evidence="1">
    <original>K</original>
    <variation>A</variation>
    <location>
        <position position="265"/>
    </location>
</feature>
<feature type="strand" evidence="7">
    <location>
        <begin position="3"/>
        <end position="15"/>
    </location>
</feature>
<feature type="helix" evidence="7">
    <location>
        <begin position="23"/>
        <end position="25"/>
    </location>
</feature>
<feature type="strand" evidence="7">
    <location>
        <begin position="27"/>
        <end position="40"/>
    </location>
</feature>
<feature type="strand" evidence="7">
    <location>
        <begin position="45"/>
        <end position="50"/>
    </location>
</feature>
<feature type="helix" evidence="7">
    <location>
        <begin position="61"/>
        <end position="72"/>
    </location>
</feature>
<feature type="helix" evidence="7">
    <location>
        <begin position="73"/>
        <end position="75"/>
    </location>
</feature>
<feature type="turn" evidence="7">
    <location>
        <begin position="76"/>
        <end position="78"/>
    </location>
</feature>
<feature type="helix" evidence="7">
    <location>
        <begin position="84"/>
        <end position="94"/>
    </location>
</feature>
<feature type="helix" evidence="7">
    <location>
        <begin position="99"/>
        <end position="117"/>
    </location>
</feature>
<feature type="helix" evidence="7">
    <location>
        <begin position="121"/>
        <end position="124"/>
    </location>
</feature>
<feature type="strand" evidence="7">
    <location>
        <begin position="131"/>
        <end position="139"/>
    </location>
</feature>
<feature type="helix" evidence="7">
    <location>
        <begin position="144"/>
        <end position="156"/>
    </location>
</feature>
<feature type="strand" evidence="7">
    <location>
        <begin position="161"/>
        <end position="165"/>
    </location>
</feature>
<feature type="helix" evidence="7">
    <location>
        <begin position="170"/>
        <end position="183"/>
    </location>
</feature>
<feature type="strand" evidence="7">
    <location>
        <begin position="188"/>
        <end position="193"/>
    </location>
</feature>
<feature type="helix" evidence="7">
    <location>
        <begin position="200"/>
        <end position="209"/>
    </location>
</feature>
<feature type="turn" evidence="7">
    <location>
        <begin position="210"/>
        <end position="212"/>
    </location>
</feature>
<feature type="strand" evidence="7">
    <location>
        <begin position="216"/>
        <end position="218"/>
    </location>
</feature>
<feature type="strand" evidence="7">
    <location>
        <begin position="221"/>
        <end position="223"/>
    </location>
</feature>
<feature type="helix" evidence="7">
    <location>
        <begin position="224"/>
        <end position="231"/>
    </location>
</feature>
<feature type="strand" evidence="7">
    <location>
        <begin position="238"/>
        <end position="240"/>
    </location>
</feature>
<feature type="helix" evidence="7">
    <location>
        <begin position="247"/>
        <end position="255"/>
    </location>
</feature>
<feature type="strand" evidence="7">
    <location>
        <begin position="260"/>
        <end position="265"/>
    </location>
</feature>
<feature type="turn" evidence="7">
    <location>
        <begin position="266"/>
        <end position="270"/>
    </location>
</feature>
<feature type="helix" evidence="7">
    <location>
        <begin position="272"/>
        <end position="284"/>
    </location>
</feature>
<feature type="strand" evidence="7">
    <location>
        <begin position="289"/>
        <end position="292"/>
    </location>
</feature>
<feature type="helix" evidence="7">
    <location>
        <begin position="298"/>
        <end position="309"/>
    </location>
</feature>
<feature type="helix" evidence="7">
    <location>
        <begin position="313"/>
        <end position="315"/>
    </location>
</feature>
<feature type="strand" evidence="7">
    <location>
        <begin position="316"/>
        <end position="319"/>
    </location>
</feature>
<feature type="helix" evidence="7">
    <location>
        <begin position="322"/>
        <end position="325"/>
    </location>
</feature>
<feature type="helix" evidence="7">
    <location>
        <begin position="356"/>
        <end position="359"/>
    </location>
</feature>
<feature type="strand" evidence="7">
    <location>
        <begin position="363"/>
        <end position="366"/>
    </location>
</feature>
<name>C3HPD_ROSAI</name>
<dbReference type="EC" id="4.2.1.171" evidence="1"/>
<dbReference type="EMBL" id="AAUW01000014">
    <property type="protein sequence ID" value="EAV42585.1"/>
    <property type="molecule type" value="Genomic_DNA"/>
</dbReference>
<dbReference type="RefSeq" id="WP_006937105.1">
    <property type="nucleotide sequence ID" value="NZ_AAUW01000014.1"/>
</dbReference>
<dbReference type="PDB" id="4MGG">
    <property type="method" value="X-ray"/>
    <property type="resolution" value="2.20 A"/>
    <property type="chains" value="A/B/C/D/E/F/G/H=1-367"/>
</dbReference>
<dbReference type="PDBsum" id="4MGG"/>
<dbReference type="SMR" id="A0NXQ8"/>
<dbReference type="GeneID" id="68848137"/>
<dbReference type="KEGG" id="ag:EAV42585"/>
<dbReference type="eggNOG" id="COG4948">
    <property type="taxonomic scope" value="Bacteria"/>
</dbReference>
<dbReference type="OrthoDB" id="9802699at2"/>
<dbReference type="BRENDA" id="4.2.1.171">
    <property type="organism ID" value="9995"/>
</dbReference>
<dbReference type="EvolutionaryTrace" id="A0NXQ8"/>
<dbReference type="Proteomes" id="UP000004848">
    <property type="component" value="Unassembled WGS sequence"/>
</dbReference>
<dbReference type="GO" id="GO:0016597">
    <property type="term" value="F:amino acid binding"/>
    <property type="evidence" value="ECO:0000314"/>
    <property type="project" value="UniProtKB"/>
</dbReference>
<dbReference type="GO" id="GO:0016836">
    <property type="term" value="F:hydro-lyase activity"/>
    <property type="evidence" value="ECO:0000314"/>
    <property type="project" value="UniProtKB"/>
</dbReference>
<dbReference type="GO" id="GO:0016853">
    <property type="term" value="F:isomerase activity"/>
    <property type="evidence" value="ECO:0007669"/>
    <property type="project" value="UniProtKB-KW"/>
</dbReference>
<dbReference type="GO" id="GO:0000287">
    <property type="term" value="F:magnesium ion binding"/>
    <property type="evidence" value="ECO:0000314"/>
    <property type="project" value="UniProtKB"/>
</dbReference>
<dbReference type="GO" id="GO:1901605">
    <property type="term" value="P:alpha-amino acid metabolic process"/>
    <property type="evidence" value="ECO:0000314"/>
    <property type="project" value="UniProtKB"/>
</dbReference>
<dbReference type="GO" id="GO:0071230">
    <property type="term" value="P:cellular response to amino acid stimulus"/>
    <property type="evidence" value="ECO:0000314"/>
    <property type="project" value="UniProtKB"/>
</dbReference>
<dbReference type="CDD" id="cd03316">
    <property type="entry name" value="MR_like"/>
    <property type="match status" value="1"/>
</dbReference>
<dbReference type="FunFam" id="3.20.20.120:FF:000020">
    <property type="entry name" value="4-hydroxyproline betaine 2-epimerase"/>
    <property type="match status" value="1"/>
</dbReference>
<dbReference type="FunFam" id="3.30.390.10:FF:000009">
    <property type="entry name" value="Hydrophobic dipeptide epimerase"/>
    <property type="match status" value="1"/>
</dbReference>
<dbReference type="Gene3D" id="3.20.20.120">
    <property type="entry name" value="Enolase-like C-terminal domain"/>
    <property type="match status" value="1"/>
</dbReference>
<dbReference type="Gene3D" id="3.30.390.10">
    <property type="entry name" value="Enolase-like, N-terminal domain"/>
    <property type="match status" value="1"/>
</dbReference>
<dbReference type="InterPro" id="IPR034620">
    <property type="entry name" value="Cis-3-h-L-Pro_dehydratase"/>
</dbReference>
<dbReference type="InterPro" id="IPR034593">
    <property type="entry name" value="DgoD-like"/>
</dbReference>
<dbReference type="InterPro" id="IPR036849">
    <property type="entry name" value="Enolase-like_C_sf"/>
</dbReference>
<dbReference type="InterPro" id="IPR029017">
    <property type="entry name" value="Enolase-like_N"/>
</dbReference>
<dbReference type="InterPro" id="IPR029065">
    <property type="entry name" value="Enolase_C-like"/>
</dbReference>
<dbReference type="InterPro" id="IPR054855">
    <property type="entry name" value="HProlDhtase"/>
</dbReference>
<dbReference type="InterPro" id="IPR013342">
    <property type="entry name" value="Mandelate_racemase_C"/>
</dbReference>
<dbReference type="InterPro" id="IPR013341">
    <property type="entry name" value="Mandelate_racemase_N_dom"/>
</dbReference>
<dbReference type="NCBIfam" id="NF043002">
    <property type="entry name" value="HProlDhtase"/>
    <property type="match status" value="1"/>
</dbReference>
<dbReference type="PANTHER" id="PTHR48080">
    <property type="entry name" value="D-GALACTONATE DEHYDRATASE-RELATED"/>
    <property type="match status" value="1"/>
</dbReference>
<dbReference type="PANTHER" id="PTHR48080:SF3">
    <property type="entry name" value="ENOLASE SUPERFAMILY MEMBER DDB_G0284701"/>
    <property type="match status" value="1"/>
</dbReference>
<dbReference type="Pfam" id="PF13378">
    <property type="entry name" value="MR_MLE_C"/>
    <property type="match status" value="1"/>
</dbReference>
<dbReference type="Pfam" id="PF02746">
    <property type="entry name" value="MR_MLE_N"/>
    <property type="match status" value="1"/>
</dbReference>
<dbReference type="SFLD" id="SFLDF00555">
    <property type="entry name" value="cis-3-hydroxy-L-proline_dehydr"/>
    <property type="match status" value="1"/>
</dbReference>
<dbReference type="SFLD" id="SFLDS00001">
    <property type="entry name" value="Enolase"/>
    <property type="match status" value="1"/>
</dbReference>
<dbReference type="SMART" id="SM00922">
    <property type="entry name" value="MR_MLE"/>
    <property type="match status" value="1"/>
</dbReference>
<dbReference type="SUPFAM" id="SSF51604">
    <property type="entry name" value="Enolase C-terminal domain-like"/>
    <property type="match status" value="1"/>
</dbReference>
<dbReference type="SUPFAM" id="SSF54826">
    <property type="entry name" value="Enolase N-terminal domain-like"/>
    <property type="match status" value="1"/>
</dbReference>
<sequence length="367" mass="39636">MKITAINVFQVDLPLREGRYSWSNGNFVEVFDSTVVEIETDEGLKGYAECCPLGSAYLPSYALGVRSGLQELAPHLIGKDPLNIGEINRVMDAALRGHPYAKAPIDIACWDLLGKATGQPLYTLLGGAAQDDVALYRAISQEAPEIMAKKIEGYAAEGYTKFQLKVGGDANDDINRIHATRSVLKKSDLLVADANTGWTRHEAARVVGAVSSLDVYIEQPCLTYEESVSIRRRTALPFVLDEVIDGPNTLVRGIAEDAMDCINLKISKVGGLTKAKLMRDLCIAHGIPMTIEDTWGGDIVTAAIAHLARSTPSEFTFSATDFNSYGTVDIAEGAPKRVNGRMTTSDLPGLGITPIFDVLGEPVARYS</sequence>
<proteinExistence type="evidence at protein level"/>
<evidence type="ECO:0000269" key="1">
    <source>
    </source>
</evidence>
<evidence type="ECO:0000303" key="2">
    <source>
    </source>
</evidence>
<evidence type="ECO:0000305" key="3"/>
<evidence type="ECO:0000305" key="4">
    <source>
    </source>
</evidence>
<evidence type="ECO:0000312" key="5">
    <source>
        <dbReference type="EMBL" id="EAV42585.1"/>
    </source>
</evidence>
<evidence type="ECO:0007744" key="6">
    <source>
        <dbReference type="PDB" id="4MGG"/>
    </source>
</evidence>
<evidence type="ECO:0007829" key="7">
    <source>
        <dbReference type="PDB" id="4MGG"/>
    </source>
</evidence>
<organism>
    <name type="scientific">Roseibium aggregatum (strain ATCC 25650 / DSM 13394 / JCM 20685 / NBRC 16684 / NCIMB 2208 / IAM 12614 / B1)</name>
    <name type="common">Stappia aggregata</name>
    <dbReference type="NCBI Taxonomy" id="384765"/>
    <lineage>
        <taxon>Bacteria</taxon>
        <taxon>Pseudomonadati</taxon>
        <taxon>Pseudomonadota</taxon>
        <taxon>Alphaproteobacteria</taxon>
        <taxon>Hyphomicrobiales</taxon>
        <taxon>Stappiaceae</taxon>
        <taxon>Roseibium</taxon>
    </lineage>
</organism>
<reference key="1">
    <citation type="submission" date="2006-05" db="EMBL/GenBank/DDBJ databases">
        <authorList>
            <person name="King G."/>
            <person name="Ferriera S."/>
            <person name="Johnson J."/>
            <person name="Kravitz S."/>
            <person name="Beeson K."/>
            <person name="Sutton G."/>
            <person name="Rogers Y.-H."/>
            <person name="Friedman R."/>
            <person name="Frazier M."/>
            <person name="Venter J.C."/>
        </authorList>
    </citation>
    <scope>NUCLEOTIDE SEQUENCE [LARGE SCALE GENOMIC DNA]</scope>
    <source>
        <strain>ATCC 25650 / DSM 13394 / JCM 20685 / NBRC 16684 / NCIMB 2208 / IAM 12614 / B1</strain>
    </source>
</reference>
<reference key="2">
    <citation type="journal article" date="2015" name="J. Am. Chem. Soc.">
        <title>A unique cis-3-hydroxy-L-proline dehydratase in the enolase superfamily.</title>
        <authorList>
            <person name="Zhang X."/>
            <person name="Kumar R."/>
            <person name="Vetting M.W."/>
            <person name="Zhao S."/>
            <person name="Jacobson M.P."/>
            <person name="Almo S.C."/>
            <person name="Gerlt J.A."/>
        </authorList>
    </citation>
    <scope>X-RAY CRYSTALLOGRAPHY (2.20 ANGSTROMS) IN COMPLEX WITH MAGNESIUM</scope>
    <scope>FUNCTION</scope>
    <scope>CATALYTIC ACTIVITY</scope>
    <scope>SUBSTRATE SPECIFICITY</scope>
    <scope>BIOPHYSICOCHEMICAL PROPERTIES</scope>
    <scope>COFACTOR</scope>
    <scope>MUTAGENESIS OF LYS-165 AND LYS-265</scope>
    <scope>INDUCTION</scope>
    <scope>ACTIVE SITE</scope>
    <source>
        <strain>ATCC 25650 / DSM 13394 / JCM 20685 / NBRC 16684 / NCIMB 2208 / IAM 12614 / B1</strain>
    </source>
</reference>
<comment type="function">
    <text evidence="1">Catalyzes the dehydration of cis-3-hydroxy-L-proline (c3LHyp) to Delta(1)-pyrroline-2-carboxylate (Pyr2C). Is likely involved in a degradation pathway that converts c3LHyp to L-proline, which allows L.aggregata to grow on c3LHyp as a sole carbon source. Also catalyzes the epimerization of c3LHyp to trans-3-hydroxy-D-proline (t3DHyp), a competing reaction occurring from the same enolate anion intermediate. L-proline, t3LHyp, t4LHyp, c4DHyp and their methylated derivatives are not substrates.</text>
</comment>
<comment type="catalytic activity">
    <reaction evidence="1">
        <text>cis-3-hydroxy-L-proline = 1-pyrroline-2-carboxylate + H2O</text>
        <dbReference type="Rhea" id="RHEA:47624"/>
        <dbReference type="ChEBI" id="CHEBI:15377"/>
        <dbReference type="ChEBI" id="CHEBI:39785"/>
        <dbReference type="ChEBI" id="CHEBI:60041"/>
        <dbReference type="EC" id="4.2.1.171"/>
    </reaction>
</comment>
<comment type="cofactor">
    <cofactor evidence="1">
        <name>Mg(2+)</name>
        <dbReference type="ChEBI" id="CHEBI:18420"/>
    </cofactor>
    <text evidence="1">Binds 1 Mg(2+) ion per subunit.</text>
</comment>
<comment type="biophysicochemical properties">
    <kinetics>
        <KM evidence="1">8.1 mM for cis-3-hydroxy-L-proline</KM>
        <text evidence="1">kcat is 14 sec(-1) for c3LHyp epimerization, and 9 sec(-1) for c3LHyp dehydration.</text>
    </kinetics>
</comment>
<comment type="induction">
    <text evidence="1">Is up-regulated when the bacterium is grown on c3LHyp or t3LHyp as sole carbon source.</text>
</comment>
<comment type="similarity">
    <text evidence="3">Belongs to the mandelate racemase/muconate lactonizing enzyme family.</text>
</comment>